<name>AA13_PYRO7</name>
<reference key="1">
    <citation type="submission" date="2005-01" db="EMBL/GenBank/DDBJ databases">
        <title>The sequence of Magnaporthe grisea chromosome 7.</title>
        <authorList>
            <person name="Thon M.R."/>
            <person name="Pan H."/>
            <person name="Diener A."/>
            <person name="Papalas J."/>
            <person name="Taro A."/>
            <person name="Mitchell T."/>
            <person name="Dean R.A."/>
        </authorList>
    </citation>
    <scope>NUCLEOTIDE SEQUENCE [LARGE SCALE GENOMIC DNA]</scope>
    <source>
        <strain>70-15 / ATCC MYA-4617 / FGSC 8958</strain>
    </source>
</reference>
<reference key="2">
    <citation type="journal article" date="2005" name="Nature">
        <title>The genome sequence of the rice blast fungus Magnaporthe grisea.</title>
        <authorList>
            <person name="Dean R.A."/>
            <person name="Talbot N.J."/>
            <person name="Ebbole D.J."/>
            <person name="Farman M.L."/>
            <person name="Mitchell T.K."/>
            <person name="Orbach M.J."/>
            <person name="Thon M.R."/>
            <person name="Kulkarni R."/>
            <person name="Xu J.-R."/>
            <person name="Pan H."/>
            <person name="Read N.D."/>
            <person name="Lee Y.-H."/>
            <person name="Carbone I."/>
            <person name="Brown D."/>
            <person name="Oh Y.Y."/>
            <person name="Donofrio N."/>
            <person name="Jeong J.S."/>
            <person name="Soanes D.M."/>
            <person name="Djonovic S."/>
            <person name="Kolomiets E."/>
            <person name="Rehmeyer C."/>
            <person name="Li W."/>
            <person name="Harding M."/>
            <person name="Kim S."/>
            <person name="Lebrun M.-H."/>
            <person name="Bohnert H."/>
            <person name="Coughlan S."/>
            <person name="Butler J."/>
            <person name="Calvo S.E."/>
            <person name="Ma L.-J."/>
            <person name="Nicol R."/>
            <person name="Purcell S."/>
            <person name="Nusbaum C."/>
            <person name="Galagan J.E."/>
            <person name="Birren B.W."/>
        </authorList>
    </citation>
    <scope>NUCLEOTIDE SEQUENCE [LARGE SCALE GENOMIC DNA]</scope>
    <source>
        <strain>70-15 / ATCC MYA-4617 / FGSC 8958</strain>
    </source>
</reference>
<reference key="3">
    <citation type="journal article" date="2016" name="FEBS Lett.">
        <title>Fungal lytic polysaccharide monooxygenases bind starch and beta-cyclodextrin similarly to amylolytic hydrolases.</title>
        <authorList>
            <person name="Nekiunaite L."/>
            <person name="Isaksen T."/>
            <person name="Vaaje-Kolstad G."/>
            <person name="Abou Hachem M."/>
        </authorList>
    </citation>
    <scope>FUNCTION</scope>
    <scope>CATALYTIC ACTIVITY</scope>
    <scope>ACTIVITY REGULATION</scope>
    <scope>GLYCOSYLATION</scope>
    <scope>SUBCELLULAR LOCATION</scope>
</reference>
<sequence length="378" mass="40169">MKWSVIQALALASGVQAHGYLTFPMSRTGLNAQAGPDTCPECTILEPVTAWPDLDSAQVGRSGPCGYNARVSVDYNQPGPRWGSAPVVTYKGGDVADVQWCVDNNGDHGGMFTYRICQDQALVDKLLTPGYLPSEAEKQAAENCFRAGTLPCTDVNGQSCGYSPDCSPGQACWRNDWFTCKGFQDTKCRGVDNAPLNSCYTSIAGGYTVSSRIKIPNYVSNHTLLSFKWNSFQTPQIYLTCADIKITAPDSQSPPTTTTTSTPASPPPTSCATPAASVAVTFRSKTTTSVGQTVKIAGSIAQLGGWDASKAPALSASQYTSSNPLWTTTISLPAGATFEYKFIRVESSGAVTYESGANRVYTVPRDCAGTATVDTAWK</sequence>
<accession>A0A151V4J3</accession>
<accession>Q2KEQ8</accession>
<proteinExistence type="evidence at protein level"/>
<gene>
    <name evidence="8" type="primary">LPMO13A</name>
    <name type="ORF">MGG_10208</name>
</gene>
<protein>
    <recommendedName>
        <fullName evidence="8">AA13 family lytic polysaccharide monooxygenase A</fullName>
        <shortName evidence="8">LPMO13A</shortName>
        <ecNumber evidence="7">1.14.99.55</ecNumber>
    </recommendedName>
</protein>
<evidence type="ECO:0000250" key="1">
    <source>
        <dbReference type="UniProtKB" id="Q2U8Y3"/>
    </source>
</evidence>
<evidence type="ECO:0000250" key="2">
    <source>
        <dbReference type="UniProtKB" id="Q7SCE9"/>
    </source>
</evidence>
<evidence type="ECO:0000255" key="3"/>
<evidence type="ECO:0000255" key="4">
    <source>
        <dbReference type="PROSITE-ProRule" id="PRU00498"/>
    </source>
</evidence>
<evidence type="ECO:0000255" key="5">
    <source>
        <dbReference type="PROSITE-ProRule" id="PRU00594"/>
    </source>
</evidence>
<evidence type="ECO:0000256" key="6">
    <source>
        <dbReference type="SAM" id="MobiDB-lite"/>
    </source>
</evidence>
<evidence type="ECO:0000269" key="7">
    <source>
    </source>
</evidence>
<evidence type="ECO:0000303" key="8">
    <source>
    </source>
</evidence>
<evidence type="ECO:0000305" key="9"/>
<dbReference type="EC" id="1.14.99.55" evidence="7"/>
<dbReference type="EMBL" id="CM000230">
    <property type="protein sequence ID" value="EAQ71571.1"/>
    <property type="status" value="ALT_SEQ"/>
    <property type="molecule type" value="Genomic_DNA"/>
</dbReference>
<dbReference type="EMBL" id="JH165177">
    <property type="protein sequence ID" value="KYQ30499.1"/>
    <property type="molecule type" value="Genomic_DNA"/>
</dbReference>
<dbReference type="RefSeq" id="XP_016846003.1">
    <property type="nucleotide sequence ID" value="XM_016990482.1"/>
</dbReference>
<dbReference type="SMR" id="A0A151V4J3"/>
<dbReference type="STRING" id="242507.A0A151V4J3"/>
<dbReference type="CAZy" id="AA13">
    <property type="family name" value="Auxiliary Activities 13"/>
</dbReference>
<dbReference type="CAZy" id="CBM20">
    <property type="family name" value="Carbohydrate-Binding Module Family 20"/>
</dbReference>
<dbReference type="EnsemblFungi" id="MGG_10208T0">
    <property type="protein sequence ID" value="MGG_10208T0"/>
    <property type="gene ID" value="MGG_10208"/>
</dbReference>
<dbReference type="GeneID" id="2681855"/>
<dbReference type="KEGG" id="mgr:MGG_10208"/>
<dbReference type="VEuPathDB" id="FungiDB:MGG_10208"/>
<dbReference type="eggNOG" id="ENOG502QSJT">
    <property type="taxonomic scope" value="Eukaryota"/>
</dbReference>
<dbReference type="InParanoid" id="A0A151V4J3"/>
<dbReference type="OMA" id="SWKWNSF"/>
<dbReference type="OrthoDB" id="550577at2759"/>
<dbReference type="BRENDA" id="1.14.99.55">
    <property type="organism ID" value="5238"/>
</dbReference>
<dbReference type="Proteomes" id="UP000009058">
    <property type="component" value="Unassembled WGS sequence"/>
</dbReference>
<dbReference type="GO" id="GO:0005576">
    <property type="term" value="C:extracellular region"/>
    <property type="evidence" value="ECO:0007669"/>
    <property type="project" value="UniProtKB-SubCell"/>
</dbReference>
<dbReference type="GO" id="GO:0016020">
    <property type="term" value="C:membrane"/>
    <property type="evidence" value="ECO:0007669"/>
    <property type="project" value="TreeGrafter"/>
</dbReference>
<dbReference type="GO" id="GO:0046872">
    <property type="term" value="F:metal ion binding"/>
    <property type="evidence" value="ECO:0007669"/>
    <property type="project" value="UniProtKB-KW"/>
</dbReference>
<dbReference type="GO" id="GO:0016491">
    <property type="term" value="F:oxidoreductase activity"/>
    <property type="evidence" value="ECO:0007669"/>
    <property type="project" value="UniProtKB-KW"/>
</dbReference>
<dbReference type="GO" id="GO:2001070">
    <property type="term" value="F:starch binding"/>
    <property type="evidence" value="ECO:0007669"/>
    <property type="project" value="InterPro"/>
</dbReference>
<dbReference type="GO" id="GO:0000272">
    <property type="term" value="P:polysaccharide catabolic process"/>
    <property type="evidence" value="ECO:0007669"/>
    <property type="project" value="UniProtKB-KW"/>
</dbReference>
<dbReference type="CDD" id="cd05811">
    <property type="entry name" value="CBM20_glucoamylase"/>
    <property type="match status" value="1"/>
</dbReference>
<dbReference type="FunFam" id="2.60.40.10:FF:000552">
    <property type="entry name" value="Related to glucoamylase"/>
    <property type="match status" value="1"/>
</dbReference>
<dbReference type="Gene3D" id="2.60.40.10">
    <property type="entry name" value="Immunoglobulins"/>
    <property type="match status" value="1"/>
</dbReference>
<dbReference type="InterPro" id="IPR013784">
    <property type="entry name" value="Carb-bd-like_fold"/>
</dbReference>
<dbReference type="InterPro" id="IPR002044">
    <property type="entry name" value="CBM20"/>
</dbReference>
<dbReference type="InterPro" id="IPR034836">
    <property type="entry name" value="CBM20_glucoamylase"/>
</dbReference>
<dbReference type="InterPro" id="IPR013783">
    <property type="entry name" value="Ig-like_fold"/>
</dbReference>
<dbReference type="PANTHER" id="PTHR15048">
    <property type="entry name" value="STARCH-BINDING DOMAIN-CONTAINING PROTEIN 1"/>
    <property type="match status" value="1"/>
</dbReference>
<dbReference type="PANTHER" id="PTHR15048:SF0">
    <property type="entry name" value="STARCH-BINDING DOMAIN-CONTAINING PROTEIN 1"/>
    <property type="match status" value="1"/>
</dbReference>
<dbReference type="Pfam" id="PF00686">
    <property type="entry name" value="CBM_20"/>
    <property type="match status" value="1"/>
</dbReference>
<dbReference type="SMART" id="SM01065">
    <property type="entry name" value="CBM_2"/>
    <property type="match status" value="1"/>
</dbReference>
<dbReference type="SUPFAM" id="SSF49452">
    <property type="entry name" value="Starch-binding domain-like"/>
    <property type="match status" value="1"/>
</dbReference>
<dbReference type="PROSITE" id="PS51166">
    <property type="entry name" value="CBM20"/>
    <property type="match status" value="1"/>
</dbReference>
<comment type="function">
    <text evidence="7 9">Starch-active lytic polysaccharide monooxygenase that oxidizes the C1 position of starch substrates (PubMed:27397613). Catalysis by LPMOs requires the reduction of the active-site copper from Cu(II) to Cu(I) by a reducing agent and H(2)O(2) or O(2) as a cosubstrate (Probable).</text>
</comment>
<comment type="catalytic activity">
    <reaction evidence="7">
        <text>starch + reduced acceptor + O2 = D-glucono-1,5-lactone-terminated malto-oligosaccharides + short-chain malto-oligosaccharides + acceptor + H2O.</text>
        <dbReference type="EC" id="1.14.99.55"/>
    </reaction>
</comment>
<comment type="cofactor">
    <cofactor evidence="2">
        <name>Cu(2+)</name>
        <dbReference type="ChEBI" id="CHEBI:29036"/>
    </cofactor>
    <text evidence="2">Binds 1 copper ion per subunit.</text>
</comment>
<comment type="activity regulation">
    <text evidence="7">Activity is inhibited by both beta-cyclodextrin or amylose that block the access to the active site.</text>
</comment>
<comment type="subcellular location">
    <subcellularLocation>
        <location evidence="7">Secreted</location>
    </subcellularLocation>
</comment>
<comment type="domain">
    <text evidence="7">The CBM20 domain is involved in binding to starch.</text>
</comment>
<comment type="PTM">
    <text evidence="7">O-mannosylated.</text>
</comment>
<comment type="biotechnology">
    <text evidence="2">Starch-active PMOs provide an expanded perspective on studies of starch metabolism and may have potential in the food and starch-based biofuel industries.</text>
</comment>
<comment type="similarity">
    <text evidence="9">Belongs to the polysaccharide monooxygenase AA13 family.</text>
</comment>
<comment type="sequence caution" evidence="9">
    <conflict type="erroneous gene model prediction">
        <sequence resource="EMBL-CDS" id="EAQ71571"/>
    </conflict>
</comment>
<feature type="signal peptide" evidence="3">
    <location>
        <begin position="1"/>
        <end position="17"/>
    </location>
</feature>
<feature type="chain" id="PRO_5007589984" description="AA13 family lytic polysaccharide monooxygenase A">
    <location>
        <begin position="18"/>
        <end position="378"/>
    </location>
</feature>
<feature type="domain" description="Chitin-binding type-4" evidence="3">
    <location>
        <begin position="18"/>
        <end position="244"/>
    </location>
</feature>
<feature type="domain" description="CBM20" evidence="5">
    <location>
        <begin position="272"/>
        <end position="378"/>
    </location>
</feature>
<feature type="region of interest" description="Disordered" evidence="6">
    <location>
        <begin position="250"/>
        <end position="272"/>
    </location>
</feature>
<feature type="compositionally biased region" description="Low complexity" evidence="6">
    <location>
        <begin position="250"/>
        <end position="263"/>
    </location>
</feature>
<feature type="binding site" evidence="1">
    <location>
        <position position="18"/>
    </location>
    <ligand>
        <name>Cu(2+)</name>
        <dbReference type="ChEBI" id="CHEBI:29036"/>
        <note>catalytic</note>
    </ligand>
</feature>
<feature type="binding site" evidence="1">
    <location>
        <position position="108"/>
    </location>
    <ligand>
        <name>Cu(2+)</name>
        <dbReference type="ChEBI" id="CHEBI:29036"/>
        <note>catalytic</note>
    </ligand>
</feature>
<feature type="binding site" evidence="1">
    <location>
        <position position="238"/>
    </location>
    <ligand>
        <name>Cu(2+)</name>
        <dbReference type="ChEBI" id="CHEBI:29036"/>
        <note>catalytic</note>
    </ligand>
</feature>
<feature type="modified residue" description="Methylhistidine" evidence="2">
    <location>
        <position position="18"/>
    </location>
</feature>
<feature type="glycosylation site" description="N-linked (GlcNAc...) asparagine" evidence="4">
    <location>
        <position position="221"/>
    </location>
</feature>
<feature type="disulfide bond" evidence="1">
    <location>
        <begin position="39"/>
        <end position="42"/>
    </location>
</feature>
<feature type="disulfide bond" evidence="1">
    <location>
        <begin position="65"/>
        <end position="241"/>
    </location>
</feature>
<feature type="disulfide bond" evidence="1">
    <location>
        <begin position="101"/>
        <end position="199"/>
    </location>
</feature>
<feature type="disulfide bond" evidence="1">
    <location>
        <begin position="117"/>
        <end position="144"/>
    </location>
</feature>
<feature type="disulfide bond" evidence="1">
    <location>
        <begin position="152"/>
        <end position="160"/>
    </location>
</feature>
<feature type="disulfide bond" evidence="1">
    <location>
        <begin position="166"/>
        <end position="172"/>
    </location>
</feature>
<feature type="disulfide bond" evidence="1">
    <location>
        <begin position="180"/>
        <end position="188"/>
    </location>
</feature>
<keyword id="KW-0119">Carbohydrate metabolism</keyword>
<keyword id="KW-0186">Copper</keyword>
<keyword id="KW-1015">Disulfide bond</keyword>
<keyword id="KW-0325">Glycoprotein</keyword>
<keyword id="KW-0479">Metal-binding</keyword>
<keyword id="KW-0488">Methylation</keyword>
<keyword id="KW-0560">Oxidoreductase</keyword>
<keyword id="KW-0624">Polysaccharide degradation</keyword>
<keyword id="KW-1185">Reference proteome</keyword>
<keyword id="KW-0964">Secreted</keyword>
<keyword id="KW-0732">Signal</keyword>
<organism>
    <name type="scientific">Pyricularia oryzae (strain 70-15 / ATCC MYA-4617 / FGSC 8958)</name>
    <name type="common">Rice blast fungus</name>
    <name type="synonym">Magnaporthe oryzae</name>
    <dbReference type="NCBI Taxonomy" id="242507"/>
    <lineage>
        <taxon>Eukaryota</taxon>
        <taxon>Fungi</taxon>
        <taxon>Dikarya</taxon>
        <taxon>Ascomycota</taxon>
        <taxon>Pezizomycotina</taxon>
        <taxon>Sordariomycetes</taxon>
        <taxon>Sordariomycetidae</taxon>
        <taxon>Magnaporthales</taxon>
        <taxon>Pyriculariaceae</taxon>
        <taxon>Pyricularia</taxon>
    </lineage>
</organism>